<sequence length="861" mass="97323">MSRVIVKGLPIYLTEPELQKHFNKRLITTHATSNVDGLITDLRILKNREGKSRRFAFIGYKNEQDALDAVNYFDGSFIYTSKIEVDMAKSFADPRVPKSMKEKKREALKRLREKEEKLLEEKNKKLKVQDTKSKINIDAEIEKDKQLKEFIETMKPSAQTSSWDKITETAEPESGLAEEQELDDEESSNVNPLLKHALSMKKGDENDSDDEYMSFNNADSKAGSDESNEEEKMISLSELPVQNEESSAEPKEDDGLAKNEEISDMDWIKQRRVRIRENGEKVGEEFATNVQDKESEENSQATPAEELQEEIPDEEQAIAKIQKTGRLFLRNILYSSTEDDFKKLFSPYGELKEVHVAVDTRTGNSKGFAYVLFAKPEEAVQAYIELDKQIFQGRLLHILAADEMKDHRLDEFDLKNMPLKKQRELKKKAAASKATFSWNSLYMNQDAVLGSVAAKLGVQKADLIDPENSNSAVKQALAEAHVIGDVRKYFETKGVDLTKFSNLKSPSQRDDRVILVKNFPFGTTREELGELFVPFGKLERLLMPPAGTIAIVQFRDIASGRSAFSKLAFKRFKGTVIYLEKGPKDCFTKAASNEDAMEHDEEKSAKEAGPSSADLLESVSSKKTEDKEDEDEQVVDGPTVSIFIKNLNFKTTSQQLTDRFKVFSGFVVAQVKTKPDPKQKNKVLSMGFGFVEFRTKEQATAVISAMDGTVIDGHKIQLKLSHRQGNAGSQEKKKAKNGKIIVKNLPFEATRKDVFELFNSFGQLKSVRVPKKFDKSARGFAFVEFVLPKEAENAMDQLQGVHLLGRRLVMQPAEQEAANAEEELERMTKKVRKQAAVSEIAAMTRNAGKRKLDMEDEEEEF</sequence>
<comment type="function">
    <text evidence="1">Involved in pre-rRNA processing.</text>
</comment>
<comment type="subcellular location">
    <subcellularLocation>
        <location evidence="1">Nucleus</location>
    </subcellularLocation>
</comment>
<comment type="similarity">
    <text evidence="4">Belongs to the RRM MRD1 family.</text>
</comment>
<name>MRD1_CANGA</name>
<protein>
    <recommendedName>
        <fullName>Multiple RNA-binding domain-containing protein 1</fullName>
    </recommendedName>
</protein>
<accession>Q6FXP4</accession>
<dbReference type="EMBL" id="CR380948">
    <property type="protein sequence ID" value="CAG58051.1"/>
    <property type="molecule type" value="Genomic_DNA"/>
</dbReference>
<dbReference type="RefSeq" id="XP_445151.1">
    <property type="nucleotide sequence ID" value="XM_445151.1"/>
</dbReference>
<dbReference type="SMR" id="Q6FXP4"/>
<dbReference type="FunCoup" id="Q6FXP4">
    <property type="interactions" value="1270"/>
</dbReference>
<dbReference type="STRING" id="284593.Q6FXP4"/>
<dbReference type="EnsemblFungi" id="CAGL0B04169g-T">
    <property type="protein sequence ID" value="CAGL0B04169g-T-p1"/>
    <property type="gene ID" value="CAGL0B04169g"/>
</dbReference>
<dbReference type="KEGG" id="cgr:2886717"/>
<dbReference type="CGD" id="CAL0127894">
    <property type="gene designation" value="CAGL0B04169g"/>
</dbReference>
<dbReference type="VEuPathDB" id="FungiDB:CAGL0B04169g"/>
<dbReference type="eggNOG" id="KOG0110">
    <property type="taxonomic scope" value="Eukaryota"/>
</dbReference>
<dbReference type="HOGENOM" id="CLU_008479_0_0_1"/>
<dbReference type="InParanoid" id="Q6FXP4"/>
<dbReference type="OMA" id="FNNTCIQ"/>
<dbReference type="Proteomes" id="UP000002428">
    <property type="component" value="Chromosome B"/>
</dbReference>
<dbReference type="GO" id="GO:0030686">
    <property type="term" value="C:90S preribosome"/>
    <property type="evidence" value="ECO:0007669"/>
    <property type="project" value="EnsemblFungi"/>
</dbReference>
<dbReference type="GO" id="GO:0005730">
    <property type="term" value="C:nucleolus"/>
    <property type="evidence" value="ECO:0007669"/>
    <property type="project" value="EnsemblFungi"/>
</dbReference>
<dbReference type="GO" id="GO:0032040">
    <property type="term" value="C:small-subunit processome"/>
    <property type="evidence" value="ECO:0007669"/>
    <property type="project" value="EnsemblFungi"/>
</dbReference>
<dbReference type="GO" id="GO:0003729">
    <property type="term" value="F:mRNA binding"/>
    <property type="evidence" value="ECO:0007669"/>
    <property type="project" value="TreeGrafter"/>
</dbReference>
<dbReference type="GO" id="GO:0042134">
    <property type="term" value="F:rRNA primary transcript binding"/>
    <property type="evidence" value="ECO:0007669"/>
    <property type="project" value="EnsemblFungi"/>
</dbReference>
<dbReference type="GO" id="GO:0000480">
    <property type="term" value="P:endonucleolytic cleavage in 5'-ETS of tricistronic rRNA transcript (SSU-rRNA, 5.8S rRNA, LSU-rRNA)"/>
    <property type="evidence" value="ECO:0007669"/>
    <property type="project" value="EnsemblFungi"/>
</dbReference>
<dbReference type="GO" id="GO:0000447">
    <property type="term" value="P:endonucleolytic cleavage in ITS1 to separate SSU-rRNA from 5.8S rRNA and LSU-rRNA from tricistronic rRNA transcript (SSU-rRNA, 5.8S rRNA, LSU-rRNA)"/>
    <property type="evidence" value="ECO:0007669"/>
    <property type="project" value="EnsemblFungi"/>
</dbReference>
<dbReference type="GO" id="GO:0000472">
    <property type="term" value="P:endonucleolytic cleavage to generate mature 5'-end of SSU-rRNA from (SSU-rRNA, 5.8S rRNA, LSU-rRNA)"/>
    <property type="evidence" value="ECO:0007669"/>
    <property type="project" value="EnsemblFungi"/>
</dbReference>
<dbReference type="GO" id="GO:0034462">
    <property type="term" value="P:small-subunit processome assembly"/>
    <property type="evidence" value="ECO:0007669"/>
    <property type="project" value="EnsemblFungi"/>
</dbReference>
<dbReference type="CDD" id="cd12565">
    <property type="entry name" value="RRM1_MRD1"/>
    <property type="match status" value="1"/>
</dbReference>
<dbReference type="CDD" id="cd12568">
    <property type="entry name" value="RRM3_MRD1"/>
    <property type="match status" value="1"/>
</dbReference>
<dbReference type="FunFam" id="3.30.70.330:FF:000247">
    <property type="entry name" value="Multiple RNA-binding domain-containing protein 1"/>
    <property type="match status" value="1"/>
</dbReference>
<dbReference type="FunFam" id="3.30.70.330:FF:000452">
    <property type="entry name" value="Multiple RNA-binding domain-containing protein 1"/>
    <property type="match status" value="1"/>
</dbReference>
<dbReference type="FunFam" id="3.30.70.330:FF:000459">
    <property type="entry name" value="Multiple RNA-binding domain-containing protein 1"/>
    <property type="match status" value="1"/>
</dbReference>
<dbReference type="FunFam" id="3.30.70.330:FF:000706">
    <property type="entry name" value="Multiple RNA-binding domain-containing protein 1"/>
    <property type="match status" value="1"/>
</dbReference>
<dbReference type="Gene3D" id="3.30.70.330">
    <property type="match status" value="5"/>
</dbReference>
<dbReference type="InterPro" id="IPR034482">
    <property type="entry name" value="Mrd1_RRM3"/>
</dbReference>
<dbReference type="InterPro" id="IPR012677">
    <property type="entry name" value="Nucleotide-bd_a/b_plait_sf"/>
</dbReference>
<dbReference type="InterPro" id="IPR035979">
    <property type="entry name" value="RBD_domain_sf"/>
</dbReference>
<dbReference type="InterPro" id="IPR000504">
    <property type="entry name" value="RRM_dom"/>
</dbReference>
<dbReference type="InterPro" id="IPR051945">
    <property type="entry name" value="RRM_MRD1_RNA_proc_ribogen"/>
</dbReference>
<dbReference type="PANTHER" id="PTHR48039">
    <property type="entry name" value="RNA-BINDING MOTIF PROTEIN 14B"/>
    <property type="match status" value="1"/>
</dbReference>
<dbReference type="PANTHER" id="PTHR48039:SF5">
    <property type="entry name" value="RNA-BINDING PROTEIN 28"/>
    <property type="match status" value="1"/>
</dbReference>
<dbReference type="Pfam" id="PF00076">
    <property type="entry name" value="RRM_1"/>
    <property type="match status" value="5"/>
</dbReference>
<dbReference type="SMART" id="SM00360">
    <property type="entry name" value="RRM"/>
    <property type="match status" value="5"/>
</dbReference>
<dbReference type="SUPFAM" id="SSF54928">
    <property type="entry name" value="RNA-binding domain, RBD"/>
    <property type="match status" value="3"/>
</dbReference>
<dbReference type="PROSITE" id="PS50102">
    <property type="entry name" value="RRM"/>
    <property type="match status" value="5"/>
</dbReference>
<gene>
    <name type="primary">MRD1</name>
    <name type="ordered locus">CAGL0B04169g</name>
</gene>
<keyword id="KW-0539">Nucleus</keyword>
<keyword id="KW-1185">Reference proteome</keyword>
<keyword id="KW-0677">Repeat</keyword>
<keyword id="KW-0687">Ribonucleoprotein</keyword>
<keyword id="KW-0694">RNA-binding</keyword>
<keyword id="KW-0698">rRNA processing</keyword>
<reference key="1">
    <citation type="journal article" date="2004" name="Nature">
        <title>Genome evolution in yeasts.</title>
        <authorList>
            <person name="Dujon B."/>
            <person name="Sherman D."/>
            <person name="Fischer G."/>
            <person name="Durrens P."/>
            <person name="Casaregola S."/>
            <person name="Lafontaine I."/>
            <person name="de Montigny J."/>
            <person name="Marck C."/>
            <person name="Neuveglise C."/>
            <person name="Talla E."/>
            <person name="Goffard N."/>
            <person name="Frangeul L."/>
            <person name="Aigle M."/>
            <person name="Anthouard V."/>
            <person name="Babour A."/>
            <person name="Barbe V."/>
            <person name="Barnay S."/>
            <person name="Blanchin S."/>
            <person name="Beckerich J.-M."/>
            <person name="Beyne E."/>
            <person name="Bleykasten C."/>
            <person name="Boisrame A."/>
            <person name="Boyer J."/>
            <person name="Cattolico L."/>
            <person name="Confanioleri F."/>
            <person name="de Daruvar A."/>
            <person name="Despons L."/>
            <person name="Fabre E."/>
            <person name="Fairhead C."/>
            <person name="Ferry-Dumazet H."/>
            <person name="Groppi A."/>
            <person name="Hantraye F."/>
            <person name="Hennequin C."/>
            <person name="Jauniaux N."/>
            <person name="Joyet P."/>
            <person name="Kachouri R."/>
            <person name="Kerrest A."/>
            <person name="Koszul R."/>
            <person name="Lemaire M."/>
            <person name="Lesur I."/>
            <person name="Ma L."/>
            <person name="Muller H."/>
            <person name="Nicaud J.-M."/>
            <person name="Nikolski M."/>
            <person name="Oztas S."/>
            <person name="Ozier-Kalogeropoulos O."/>
            <person name="Pellenz S."/>
            <person name="Potier S."/>
            <person name="Richard G.-F."/>
            <person name="Straub M.-L."/>
            <person name="Suleau A."/>
            <person name="Swennen D."/>
            <person name="Tekaia F."/>
            <person name="Wesolowski-Louvel M."/>
            <person name="Westhof E."/>
            <person name="Wirth B."/>
            <person name="Zeniou-Meyer M."/>
            <person name="Zivanovic Y."/>
            <person name="Bolotin-Fukuhara M."/>
            <person name="Thierry A."/>
            <person name="Bouchier C."/>
            <person name="Caudron B."/>
            <person name="Scarpelli C."/>
            <person name="Gaillardin C."/>
            <person name="Weissenbach J."/>
            <person name="Wincker P."/>
            <person name="Souciet J.-L."/>
        </authorList>
    </citation>
    <scope>NUCLEOTIDE SEQUENCE [LARGE SCALE GENOMIC DNA]</scope>
    <source>
        <strain>ATCC 2001 / BCRC 20586 / JCM 3761 / NBRC 0622 / NRRL Y-65 / CBS 138</strain>
    </source>
</reference>
<feature type="chain" id="PRO_0000081639" description="Multiple RNA-binding domain-containing protein 1">
    <location>
        <begin position="1"/>
        <end position="861"/>
    </location>
</feature>
<feature type="domain" description="RRM 1" evidence="2">
    <location>
        <begin position="2"/>
        <end position="90"/>
    </location>
</feature>
<feature type="domain" description="RRM 2" evidence="2">
    <location>
        <begin position="325"/>
        <end position="403"/>
    </location>
</feature>
<feature type="domain" description="RRM 3" evidence="2">
    <location>
        <begin position="512"/>
        <end position="584"/>
    </location>
</feature>
<feature type="domain" description="RRM 4" evidence="2">
    <location>
        <begin position="640"/>
        <end position="723"/>
    </location>
</feature>
<feature type="domain" description="RRM 5" evidence="2">
    <location>
        <begin position="738"/>
        <end position="815"/>
    </location>
</feature>
<feature type="region of interest" description="Disordered" evidence="3">
    <location>
        <begin position="154"/>
        <end position="263"/>
    </location>
</feature>
<feature type="region of interest" description="Disordered" evidence="3">
    <location>
        <begin position="283"/>
        <end position="313"/>
    </location>
</feature>
<feature type="region of interest" description="Disordered" evidence="3">
    <location>
        <begin position="593"/>
        <end position="634"/>
    </location>
</feature>
<feature type="compositionally biased region" description="Acidic residues" evidence="3">
    <location>
        <begin position="176"/>
        <end position="187"/>
    </location>
</feature>
<feature type="compositionally biased region" description="Basic and acidic residues" evidence="3">
    <location>
        <begin position="248"/>
        <end position="263"/>
    </location>
</feature>
<organism>
    <name type="scientific">Candida glabrata (strain ATCC 2001 / BCRC 20586 / JCM 3761 / NBRC 0622 / NRRL Y-65 / CBS 138)</name>
    <name type="common">Yeast</name>
    <name type="synonym">Nakaseomyces glabratus</name>
    <dbReference type="NCBI Taxonomy" id="284593"/>
    <lineage>
        <taxon>Eukaryota</taxon>
        <taxon>Fungi</taxon>
        <taxon>Dikarya</taxon>
        <taxon>Ascomycota</taxon>
        <taxon>Saccharomycotina</taxon>
        <taxon>Saccharomycetes</taxon>
        <taxon>Saccharomycetales</taxon>
        <taxon>Saccharomycetaceae</taxon>
        <taxon>Nakaseomyces</taxon>
    </lineage>
</organism>
<evidence type="ECO:0000250" key="1"/>
<evidence type="ECO:0000255" key="2">
    <source>
        <dbReference type="PROSITE-ProRule" id="PRU00176"/>
    </source>
</evidence>
<evidence type="ECO:0000256" key="3">
    <source>
        <dbReference type="SAM" id="MobiDB-lite"/>
    </source>
</evidence>
<evidence type="ECO:0000305" key="4"/>
<proteinExistence type="inferred from homology"/>